<evidence type="ECO:0000256" key="1">
    <source>
        <dbReference type="SAM" id="MobiDB-lite"/>
    </source>
</evidence>
<feature type="chain" id="PRO_0000389242" description="TPR repeat-containing protein DDB_G0285095">
    <location>
        <begin position="1"/>
        <end position="263"/>
    </location>
</feature>
<feature type="repeat" description="TPR 1">
    <location>
        <begin position="87"/>
        <end position="120"/>
    </location>
</feature>
<feature type="repeat" description="TPR 2">
    <location>
        <begin position="121"/>
        <end position="154"/>
    </location>
</feature>
<feature type="repeat" description="TPR 3">
    <location>
        <begin position="162"/>
        <end position="195"/>
    </location>
</feature>
<feature type="region of interest" description="Disordered" evidence="1">
    <location>
        <begin position="1"/>
        <end position="62"/>
    </location>
</feature>
<feature type="compositionally biased region" description="Basic and acidic residues" evidence="1">
    <location>
        <begin position="1"/>
        <end position="25"/>
    </location>
</feature>
<sequence length="263" mass="29748">MGCCGSKEKYNGEDVPKSQRLENRPTNDVNGKQPQRQQPPNKRKNNTIRKGAASASQQNNPTSLFEITDLSLKNDIIEGLQEQPQDSDLLAQYGVLLSMEGKNKEAEESLRKAVEVDTDNSRAWQAYGEFLERTNNPKKAKEVYGEAYKHAAPKIALDEDDSSLLLSYAIFIQKSGEIDKAEKLYKRIVTSGARSSESLGRYGLFLLEVKKDVEKGGIYLKDAADIDPPSPEWCTRYSNYLKTYKKDEFEATKYQKRVSLYVN</sequence>
<reference key="1">
    <citation type="journal article" date="2005" name="Nature">
        <title>The genome of the social amoeba Dictyostelium discoideum.</title>
        <authorList>
            <person name="Eichinger L."/>
            <person name="Pachebat J.A."/>
            <person name="Gloeckner G."/>
            <person name="Rajandream M.A."/>
            <person name="Sucgang R."/>
            <person name="Berriman M."/>
            <person name="Song J."/>
            <person name="Olsen R."/>
            <person name="Szafranski K."/>
            <person name="Xu Q."/>
            <person name="Tunggal B."/>
            <person name="Kummerfeld S."/>
            <person name="Madera M."/>
            <person name="Konfortov B.A."/>
            <person name="Rivero F."/>
            <person name="Bankier A.T."/>
            <person name="Lehmann R."/>
            <person name="Hamlin N."/>
            <person name="Davies R."/>
            <person name="Gaudet P."/>
            <person name="Fey P."/>
            <person name="Pilcher K."/>
            <person name="Chen G."/>
            <person name="Saunders D."/>
            <person name="Sodergren E.J."/>
            <person name="Davis P."/>
            <person name="Kerhornou A."/>
            <person name="Nie X."/>
            <person name="Hall N."/>
            <person name="Anjard C."/>
            <person name="Hemphill L."/>
            <person name="Bason N."/>
            <person name="Farbrother P."/>
            <person name="Desany B."/>
            <person name="Just E."/>
            <person name="Morio T."/>
            <person name="Rost R."/>
            <person name="Churcher C.M."/>
            <person name="Cooper J."/>
            <person name="Haydock S."/>
            <person name="van Driessche N."/>
            <person name="Cronin A."/>
            <person name="Goodhead I."/>
            <person name="Muzny D.M."/>
            <person name="Mourier T."/>
            <person name="Pain A."/>
            <person name="Lu M."/>
            <person name="Harper D."/>
            <person name="Lindsay R."/>
            <person name="Hauser H."/>
            <person name="James K.D."/>
            <person name="Quiles M."/>
            <person name="Madan Babu M."/>
            <person name="Saito T."/>
            <person name="Buchrieser C."/>
            <person name="Wardroper A."/>
            <person name="Felder M."/>
            <person name="Thangavelu M."/>
            <person name="Johnson D."/>
            <person name="Knights A."/>
            <person name="Loulseged H."/>
            <person name="Mungall K.L."/>
            <person name="Oliver K."/>
            <person name="Price C."/>
            <person name="Quail M.A."/>
            <person name="Urushihara H."/>
            <person name="Hernandez J."/>
            <person name="Rabbinowitsch E."/>
            <person name="Steffen D."/>
            <person name="Sanders M."/>
            <person name="Ma J."/>
            <person name="Kohara Y."/>
            <person name="Sharp S."/>
            <person name="Simmonds M.N."/>
            <person name="Spiegler S."/>
            <person name="Tivey A."/>
            <person name="Sugano S."/>
            <person name="White B."/>
            <person name="Walker D."/>
            <person name="Woodward J.R."/>
            <person name="Winckler T."/>
            <person name="Tanaka Y."/>
            <person name="Shaulsky G."/>
            <person name="Schleicher M."/>
            <person name="Weinstock G.M."/>
            <person name="Rosenthal A."/>
            <person name="Cox E.C."/>
            <person name="Chisholm R.L."/>
            <person name="Gibbs R.A."/>
            <person name="Loomis W.F."/>
            <person name="Platzer M."/>
            <person name="Kay R.R."/>
            <person name="Williams J.G."/>
            <person name="Dear P.H."/>
            <person name="Noegel A.A."/>
            <person name="Barrell B.G."/>
            <person name="Kuspa A."/>
        </authorList>
    </citation>
    <scope>NUCLEOTIDE SEQUENCE [LARGE SCALE GENOMIC DNA]</scope>
    <source>
        <strain>AX4</strain>
    </source>
</reference>
<protein>
    <recommendedName>
        <fullName>TPR repeat-containing protein DDB_G0285095</fullName>
    </recommendedName>
</protein>
<gene>
    <name type="ORF">DDB_G0285095</name>
</gene>
<name>Y5095_DICDI</name>
<keyword id="KW-1185">Reference proteome</keyword>
<keyword id="KW-0677">Repeat</keyword>
<keyword id="KW-0802">TPR repeat</keyword>
<dbReference type="EMBL" id="AAFI02000073">
    <property type="protein sequence ID" value="EAL65011.1"/>
    <property type="molecule type" value="Genomic_DNA"/>
</dbReference>
<dbReference type="RefSeq" id="XP_639994.1">
    <property type="nucleotide sequence ID" value="XM_634902.1"/>
</dbReference>
<dbReference type="SMR" id="Q54NS3"/>
<dbReference type="STRING" id="44689.Q54NS3"/>
<dbReference type="PaxDb" id="44689-DDB0231412"/>
<dbReference type="EnsemblProtists" id="EAL65011">
    <property type="protein sequence ID" value="EAL65011"/>
    <property type="gene ID" value="DDB_G0285095"/>
</dbReference>
<dbReference type="GeneID" id="8624912"/>
<dbReference type="KEGG" id="ddi:DDB_G0285095"/>
<dbReference type="dictyBase" id="DDB_G0285095"/>
<dbReference type="VEuPathDB" id="AmoebaDB:DDB_G0285095"/>
<dbReference type="eggNOG" id="KOG4132">
    <property type="taxonomic scope" value="Eukaryota"/>
</dbReference>
<dbReference type="HOGENOM" id="CLU_1059332_0_0_1"/>
<dbReference type="InParanoid" id="Q54NS3"/>
<dbReference type="OMA" id="FAINCEK"/>
<dbReference type="Reactome" id="R-DDI-6804760">
    <property type="pathway name" value="Regulation of TP53 Activity through Methylation"/>
</dbReference>
<dbReference type="PRO" id="PR:Q54NS3"/>
<dbReference type="Proteomes" id="UP000002195">
    <property type="component" value="Chromosome 4"/>
</dbReference>
<dbReference type="Gene3D" id="1.25.40.10">
    <property type="entry name" value="Tetratricopeptide repeat domain"/>
    <property type="match status" value="1"/>
</dbReference>
<dbReference type="InterPro" id="IPR052628">
    <property type="entry name" value="CFAP70"/>
</dbReference>
<dbReference type="InterPro" id="IPR011990">
    <property type="entry name" value="TPR-like_helical_dom_sf"/>
</dbReference>
<dbReference type="InterPro" id="IPR019734">
    <property type="entry name" value="TPR_rpt"/>
</dbReference>
<dbReference type="PANTHER" id="PTHR44314">
    <property type="entry name" value="CILIA- AND FLAGELLA-ASSOCIATED PROTEIN 70"/>
    <property type="match status" value="1"/>
</dbReference>
<dbReference type="PANTHER" id="PTHR44314:SF1">
    <property type="entry name" value="CILIA- AND FLAGELLA-ASSOCIATED PROTEIN 70"/>
    <property type="match status" value="1"/>
</dbReference>
<dbReference type="Pfam" id="PF13181">
    <property type="entry name" value="TPR_8"/>
    <property type="match status" value="2"/>
</dbReference>
<dbReference type="SUPFAM" id="SSF48452">
    <property type="entry name" value="TPR-like"/>
    <property type="match status" value="1"/>
</dbReference>
<dbReference type="PROSITE" id="PS50005">
    <property type="entry name" value="TPR"/>
    <property type="match status" value="3"/>
</dbReference>
<dbReference type="PROSITE" id="PS50293">
    <property type="entry name" value="TPR_REGION"/>
    <property type="match status" value="1"/>
</dbReference>
<accession>Q54NS3</accession>
<proteinExistence type="predicted"/>
<organism>
    <name type="scientific">Dictyostelium discoideum</name>
    <name type="common">Social amoeba</name>
    <dbReference type="NCBI Taxonomy" id="44689"/>
    <lineage>
        <taxon>Eukaryota</taxon>
        <taxon>Amoebozoa</taxon>
        <taxon>Evosea</taxon>
        <taxon>Eumycetozoa</taxon>
        <taxon>Dictyostelia</taxon>
        <taxon>Dictyosteliales</taxon>
        <taxon>Dictyosteliaceae</taxon>
        <taxon>Dictyostelium</taxon>
    </lineage>
</organism>